<sequence length="338" mass="36800">MEMTHYEKTPLIRQVFNNGKTNSWFYVKHEILQPGGSFKSRGIGHLIRKSNEEALSEGSGKLAVFSSSGGNAGLAAATACRSMALNCSVVVPKTTKPRMVKKIQSAGAKVIIHGDHWGEADEYLRHKLMAQESQHGSKTLYVHPFDNETIWEGHSTIVDEIIEQLKENDISLPRVKALVCSVGGGGLFSGIIKGLDRNHLAEKIPVVAVETAGCDVLNKSLKKGSPVTLEKLTSVATSLASPYIASFAFESFNKYGCKSVVLSDQDVLATCLRYADDYNFIVEPACGASLHLCYHPEILEDILEQKIYEDDIVIIIACGGSCMTYEDLVKASSTLNVS</sequence>
<organism>
    <name type="scientific">Saccharomyces cerevisiae (strain Lalvin EC1118 / Prise de mousse)</name>
    <name type="common">Baker's yeast</name>
    <dbReference type="NCBI Taxonomy" id="643680"/>
    <lineage>
        <taxon>Eukaryota</taxon>
        <taxon>Fungi</taxon>
        <taxon>Dikarya</taxon>
        <taxon>Ascomycota</taxon>
        <taxon>Saccharomycotina</taxon>
        <taxon>Saccharomycetes</taxon>
        <taxon>Saccharomycetales</taxon>
        <taxon>Saccharomycetaceae</taxon>
        <taxon>Saccharomyces</taxon>
    </lineage>
</organism>
<proteinExistence type="inferred from homology"/>
<gene>
    <name type="primary">SDL1</name>
    <name type="synonym">SDH1</name>
    <name type="ORF">EC1118_1I12_0012g</name>
</gene>
<name>SDHL_YEAS8</name>
<dbReference type="EC" id="4.3.1.17"/>
<dbReference type="EMBL" id="FN393074">
    <property type="protein sequence ID" value="CAY80340.1"/>
    <property type="molecule type" value="Genomic_DNA"/>
</dbReference>
<dbReference type="SMR" id="C8ZAU6"/>
<dbReference type="HOGENOM" id="CLU_021152_3_1_1"/>
<dbReference type="OrthoDB" id="34905at4893"/>
<dbReference type="UniPathway" id="UPA00138"/>
<dbReference type="Proteomes" id="UP000000286">
    <property type="component" value="Chromosome IX, Scaffold EC1118_1I12"/>
</dbReference>
<dbReference type="GO" id="GO:0005737">
    <property type="term" value="C:cytoplasm"/>
    <property type="evidence" value="ECO:0007669"/>
    <property type="project" value="UniProtKB-SubCell"/>
</dbReference>
<dbReference type="GO" id="GO:0003941">
    <property type="term" value="F:L-serine ammonia-lyase activity"/>
    <property type="evidence" value="ECO:0007669"/>
    <property type="project" value="UniProtKB-EC"/>
</dbReference>
<dbReference type="GO" id="GO:0030170">
    <property type="term" value="F:pyridoxal phosphate binding"/>
    <property type="evidence" value="ECO:0007669"/>
    <property type="project" value="InterPro"/>
</dbReference>
<dbReference type="GO" id="GO:0004794">
    <property type="term" value="F:threonine deaminase activity"/>
    <property type="evidence" value="ECO:0007669"/>
    <property type="project" value="UniProtKB-ARBA"/>
</dbReference>
<dbReference type="GO" id="GO:0006094">
    <property type="term" value="P:gluconeogenesis"/>
    <property type="evidence" value="ECO:0007669"/>
    <property type="project" value="UniProtKB-UniPathway"/>
</dbReference>
<dbReference type="GO" id="GO:0009097">
    <property type="term" value="P:isoleucine biosynthetic process"/>
    <property type="evidence" value="ECO:0007669"/>
    <property type="project" value="TreeGrafter"/>
</dbReference>
<dbReference type="GO" id="GO:0006565">
    <property type="term" value="P:L-serine catabolic process"/>
    <property type="evidence" value="ECO:0007669"/>
    <property type="project" value="TreeGrafter"/>
</dbReference>
<dbReference type="GO" id="GO:0006567">
    <property type="term" value="P:threonine catabolic process"/>
    <property type="evidence" value="ECO:0007669"/>
    <property type="project" value="TreeGrafter"/>
</dbReference>
<dbReference type="CDD" id="cd06448">
    <property type="entry name" value="L-Ser-dehyd"/>
    <property type="match status" value="1"/>
</dbReference>
<dbReference type="FunFam" id="3.40.50.1100:FF:000068">
    <property type="entry name" value="Catabolic L-serine/threonine dehydratase"/>
    <property type="match status" value="1"/>
</dbReference>
<dbReference type="FunFam" id="3.40.50.1100:FF:000040">
    <property type="entry name" value="L-serine dehydratase, putative"/>
    <property type="match status" value="1"/>
</dbReference>
<dbReference type="Gene3D" id="3.40.50.1100">
    <property type="match status" value="2"/>
</dbReference>
<dbReference type="InterPro" id="IPR050147">
    <property type="entry name" value="Ser/Thr_Dehydratase"/>
</dbReference>
<dbReference type="InterPro" id="IPR000634">
    <property type="entry name" value="Ser/Thr_deHydtase_PyrdxlP-BS"/>
</dbReference>
<dbReference type="InterPro" id="IPR001926">
    <property type="entry name" value="TrpB-like_PALP"/>
</dbReference>
<dbReference type="InterPro" id="IPR036052">
    <property type="entry name" value="TrpB-like_PALP_sf"/>
</dbReference>
<dbReference type="PANTHER" id="PTHR48078:SF2">
    <property type="entry name" value="CATABOLIC L-SERINE_THREONINE DEHYDRATASE"/>
    <property type="match status" value="1"/>
</dbReference>
<dbReference type="PANTHER" id="PTHR48078">
    <property type="entry name" value="THREONINE DEHYDRATASE, MITOCHONDRIAL-RELATED"/>
    <property type="match status" value="1"/>
</dbReference>
<dbReference type="Pfam" id="PF00291">
    <property type="entry name" value="PALP"/>
    <property type="match status" value="1"/>
</dbReference>
<dbReference type="SUPFAM" id="SSF53686">
    <property type="entry name" value="Tryptophan synthase beta subunit-like PLP-dependent enzymes"/>
    <property type="match status" value="1"/>
</dbReference>
<dbReference type="PROSITE" id="PS00165">
    <property type="entry name" value="DEHYDRATASE_SER_THR"/>
    <property type="match status" value="1"/>
</dbReference>
<keyword id="KW-0963">Cytoplasm</keyword>
<keyword id="KW-0312">Gluconeogenesis</keyword>
<keyword id="KW-0456">Lyase</keyword>
<keyword id="KW-0663">Pyridoxal phosphate</keyword>
<feature type="chain" id="PRO_0000393398" description="L-serine dehydratase">
    <location>
        <begin position="1"/>
        <end position="338"/>
    </location>
</feature>
<feature type="modified residue" description="N6-(pyridoxal phosphate)lysine" evidence="1">
    <location>
        <position position="39"/>
    </location>
</feature>
<accession>C8ZAU6</accession>
<comment type="catalytic activity">
    <reaction>
        <text>L-serine = pyruvate + NH4(+)</text>
        <dbReference type="Rhea" id="RHEA:19169"/>
        <dbReference type="ChEBI" id="CHEBI:15361"/>
        <dbReference type="ChEBI" id="CHEBI:28938"/>
        <dbReference type="ChEBI" id="CHEBI:33384"/>
        <dbReference type="EC" id="4.3.1.17"/>
    </reaction>
</comment>
<comment type="cofactor">
    <cofactor evidence="1">
        <name>pyridoxal 5'-phosphate</name>
        <dbReference type="ChEBI" id="CHEBI:597326"/>
    </cofactor>
</comment>
<comment type="pathway">
    <text>Carbohydrate biosynthesis; gluconeogenesis.</text>
</comment>
<comment type="subcellular location">
    <subcellularLocation>
        <location evidence="1">Cytoplasm</location>
    </subcellularLocation>
</comment>
<comment type="similarity">
    <text evidence="2">Belongs to the serine/threonine dehydratase family.</text>
</comment>
<evidence type="ECO:0000250" key="1"/>
<evidence type="ECO:0000305" key="2"/>
<reference key="1">
    <citation type="journal article" date="2009" name="Proc. Natl. Acad. Sci. U.S.A.">
        <title>Eukaryote-to-eukaryote gene transfer events revealed by the genome sequence of the wine yeast Saccharomyces cerevisiae EC1118.</title>
        <authorList>
            <person name="Novo M."/>
            <person name="Bigey F."/>
            <person name="Beyne E."/>
            <person name="Galeote V."/>
            <person name="Gavory F."/>
            <person name="Mallet S."/>
            <person name="Cambon B."/>
            <person name="Legras J.-L."/>
            <person name="Wincker P."/>
            <person name="Casaregola S."/>
            <person name="Dequin S."/>
        </authorList>
    </citation>
    <scope>NUCLEOTIDE SEQUENCE [LARGE SCALE GENOMIC DNA]</scope>
    <source>
        <strain>Lalvin EC1118 / Prise de mousse</strain>
    </source>
</reference>
<protein>
    <recommendedName>
        <fullName>L-serine dehydratase</fullName>
        <ecNumber>4.3.1.17</ecNumber>
    </recommendedName>
    <alternativeName>
        <fullName>L-serine deaminase</fullName>
    </alternativeName>
</protein>